<dbReference type="EC" id="2.5.1.16" evidence="1"/>
<dbReference type="EMBL" id="AE003849">
    <property type="protein sequence ID" value="AAF82956.1"/>
    <property type="molecule type" value="Genomic_DNA"/>
</dbReference>
<dbReference type="PIR" id="B82842">
    <property type="entry name" value="B82842"/>
</dbReference>
<dbReference type="RefSeq" id="WP_010892688.1">
    <property type="nucleotide sequence ID" value="NC_002488.3"/>
</dbReference>
<dbReference type="SMR" id="Q9PH03"/>
<dbReference type="STRING" id="160492.XF_0143"/>
<dbReference type="KEGG" id="xfa:XF_0143"/>
<dbReference type="eggNOG" id="COG0421">
    <property type="taxonomic scope" value="Bacteria"/>
</dbReference>
<dbReference type="HOGENOM" id="CLU_048199_0_0_6"/>
<dbReference type="UniPathway" id="UPA00248">
    <property type="reaction ID" value="UER00314"/>
</dbReference>
<dbReference type="Proteomes" id="UP000000812">
    <property type="component" value="Chromosome"/>
</dbReference>
<dbReference type="GO" id="GO:0005829">
    <property type="term" value="C:cytosol"/>
    <property type="evidence" value="ECO:0007669"/>
    <property type="project" value="TreeGrafter"/>
</dbReference>
<dbReference type="GO" id="GO:0004766">
    <property type="term" value="F:spermidine synthase activity"/>
    <property type="evidence" value="ECO:0007669"/>
    <property type="project" value="UniProtKB-UniRule"/>
</dbReference>
<dbReference type="GO" id="GO:0008295">
    <property type="term" value="P:spermidine biosynthetic process"/>
    <property type="evidence" value="ECO:0007669"/>
    <property type="project" value="UniProtKB-UniRule"/>
</dbReference>
<dbReference type="CDD" id="cd02440">
    <property type="entry name" value="AdoMet_MTases"/>
    <property type="match status" value="1"/>
</dbReference>
<dbReference type="Gene3D" id="2.30.140.10">
    <property type="entry name" value="Spermidine synthase, tetramerisation domain"/>
    <property type="match status" value="1"/>
</dbReference>
<dbReference type="Gene3D" id="3.40.50.150">
    <property type="entry name" value="Vaccinia Virus protein VP39"/>
    <property type="match status" value="1"/>
</dbReference>
<dbReference type="HAMAP" id="MF_00198">
    <property type="entry name" value="Spermidine_synth"/>
    <property type="match status" value="1"/>
</dbReference>
<dbReference type="InterPro" id="IPR030374">
    <property type="entry name" value="PABS"/>
</dbReference>
<dbReference type="InterPro" id="IPR030373">
    <property type="entry name" value="PABS_CS"/>
</dbReference>
<dbReference type="InterPro" id="IPR029063">
    <property type="entry name" value="SAM-dependent_MTases_sf"/>
</dbReference>
<dbReference type="InterPro" id="IPR001045">
    <property type="entry name" value="Spermi_synthase"/>
</dbReference>
<dbReference type="InterPro" id="IPR035246">
    <property type="entry name" value="Spermidine_synt_N"/>
</dbReference>
<dbReference type="InterPro" id="IPR037163">
    <property type="entry name" value="Spermidine_synt_N_sf"/>
</dbReference>
<dbReference type="NCBIfam" id="NF002010">
    <property type="entry name" value="PRK00811.1"/>
    <property type="match status" value="1"/>
</dbReference>
<dbReference type="NCBIfam" id="TIGR00417">
    <property type="entry name" value="speE"/>
    <property type="match status" value="1"/>
</dbReference>
<dbReference type="PANTHER" id="PTHR11558:SF11">
    <property type="entry name" value="SPERMIDINE SYNTHASE"/>
    <property type="match status" value="1"/>
</dbReference>
<dbReference type="PANTHER" id="PTHR11558">
    <property type="entry name" value="SPERMIDINE/SPERMINE SYNTHASE"/>
    <property type="match status" value="1"/>
</dbReference>
<dbReference type="Pfam" id="PF17284">
    <property type="entry name" value="Spermine_synt_N"/>
    <property type="match status" value="1"/>
</dbReference>
<dbReference type="Pfam" id="PF01564">
    <property type="entry name" value="Spermine_synth"/>
    <property type="match status" value="1"/>
</dbReference>
<dbReference type="SUPFAM" id="SSF53335">
    <property type="entry name" value="S-adenosyl-L-methionine-dependent methyltransferases"/>
    <property type="match status" value="1"/>
</dbReference>
<dbReference type="PROSITE" id="PS01330">
    <property type="entry name" value="PABS_1"/>
    <property type="match status" value="1"/>
</dbReference>
<dbReference type="PROSITE" id="PS51006">
    <property type="entry name" value="PABS_2"/>
    <property type="match status" value="1"/>
</dbReference>
<organism>
    <name type="scientific">Xylella fastidiosa (strain 9a5c)</name>
    <dbReference type="NCBI Taxonomy" id="160492"/>
    <lineage>
        <taxon>Bacteria</taxon>
        <taxon>Pseudomonadati</taxon>
        <taxon>Pseudomonadota</taxon>
        <taxon>Gammaproteobacteria</taxon>
        <taxon>Lysobacterales</taxon>
        <taxon>Lysobacteraceae</taxon>
        <taxon>Xylella</taxon>
    </lineage>
</organism>
<sequence length="285" mass="31907">MTTNDSWFTEHFQATGSAIGFRITGKLDEVQSPFQKIEIYNSTDWGKLMVIDGALMLTSRDNFLYHEMISHPALFTHTAPKCVVIIGGGDCGTLREVLKHPDIEQVTQCDIDEQVTRMAEKHFPELCTSNNDPRATLLFSDGVAYMTDCPTNSVDVIIVDSTDPVGPAKGLFNRTFYESCFRALKNDGLLVQQSESPLALLELIKEMRHEMSKAGFKAFKTLPFPQPCYPTGWWSVTLSSKQPNANFAFRQTDAQTKPFDTLYYNAHLHHGVLVPPPFIAHALGE</sequence>
<reference key="1">
    <citation type="journal article" date="2000" name="Nature">
        <title>The genome sequence of the plant pathogen Xylella fastidiosa.</title>
        <authorList>
            <person name="Simpson A.J.G."/>
            <person name="Reinach F.C."/>
            <person name="Arruda P."/>
            <person name="Abreu F.A."/>
            <person name="Acencio M."/>
            <person name="Alvarenga R."/>
            <person name="Alves L.M.C."/>
            <person name="Araya J.E."/>
            <person name="Baia G.S."/>
            <person name="Baptista C.S."/>
            <person name="Barros M.H."/>
            <person name="Bonaccorsi E.D."/>
            <person name="Bordin S."/>
            <person name="Bove J.M."/>
            <person name="Briones M.R.S."/>
            <person name="Bueno M.R.P."/>
            <person name="Camargo A.A."/>
            <person name="Camargo L.E.A."/>
            <person name="Carraro D.M."/>
            <person name="Carrer H."/>
            <person name="Colauto N.B."/>
            <person name="Colombo C."/>
            <person name="Costa F.F."/>
            <person name="Costa M.C.R."/>
            <person name="Costa-Neto C.M."/>
            <person name="Coutinho L.L."/>
            <person name="Cristofani M."/>
            <person name="Dias-Neto E."/>
            <person name="Docena C."/>
            <person name="El-Dorry H."/>
            <person name="Facincani A.P."/>
            <person name="Ferreira A.J.S."/>
            <person name="Ferreira V.C.A."/>
            <person name="Ferro J.A."/>
            <person name="Fraga J.S."/>
            <person name="Franca S.C."/>
            <person name="Franco M.C."/>
            <person name="Frohme M."/>
            <person name="Furlan L.R."/>
            <person name="Garnier M."/>
            <person name="Goldman G.H."/>
            <person name="Goldman M.H.S."/>
            <person name="Gomes S.L."/>
            <person name="Gruber A."/>
            <person name="Ho P.L."/>
            <person name="Hoheisel J.D."/>
            <person name="Junqueira M.L."/>
            <person name="Kemper E.L."/>
            <person name="Kitajima J.P."/>
            <person name="Krieger J.E."/>
            <person name="Kuramae E.E."/>
            <person name="Laigret F."/>
            <person name="Lambais M.R."/>
            <person name="Leite L.C.C."/>
            <person name="Lemos E.G.M."/>
            <person name="Lemos M.V.F."/>
            <person name="Lopes S.A."/>
            <person name="Lopes C.R."/>
            <person name="Machado J.A."/>
            <person name="Machado M.A."/>
            <person name="Madeira A.M.B.N."/>
            <person name="Madeira H.M.F."/>
            <person name="Marino C.L."/>
            <person name="Marques M.V."/>
            <person name="Martins E.A.L."/>
            <person name="Martins E.M.F."/>
            <person name="Matsukuma A.Y."/>
            <person name="Menck C.F.M."/>
            <person name="Miracca E.C."/>
            <person name="Miyaki C.Y."/>
            <person name="Monteiro-Vitorello C.B."/>
            <person name="Moon D.H."/>
            <person name="Nagai M.A."/>
            <person name="Nascimento A.L.T.O."/>
            <person name="Netto L.E.S."/>
            <person name="Nhani A. Jr."/>
            <person name="Nobrega F.G."/>
            <person name="Nunes L.R."/>
            <person name="Oliveira M.A."/>
            <person name="de Oliveira M.C."/>
            <person name="de Oliveira R.C."/>
            <person name="Palmieri D.A."/>
            <person name="Paris A."/>
            <person name="Peixoto B.R."/>
            <person name="Pereira G.A.G."/>
            <person name="Pereira H.A. Jr."/>
            <person name="Pesquero J.B."/>
            <person name="Quaggio R.B."/>
            <person name="Roberto P.G."/>
            <person name="Rodrigues V."/>
            <person name="de Rosa A.J.M."/>
            <person name="de Rosa V.E. Jr."/>
            <person name="de Sa R.G."/>
            <person name="Santelli R.V."/>
            <person name="Sawasaki H.E."/>
            <person name="da Silva A.C.R."/>
            <person name="da Silva A.M."/>
            <person name="da Silva F.R."/>
            <person name="Silva W.A. Jr."/>
            <person name="da Silveira J.F."/>
            <person name="Silvestri M.L.Z."/>
            <person name="Siqueira W.J."/>
            <person name="de Souza A.A."/>
            <person name="de Souza A.P."/>
            <person name="Terenzi M.F."/>
            <person name="Truffi D."/>
            <person name="Tsai S.M."/>
            <person name="Tsuhako M.H."/>
            <person name="Vallada H."/>
            <person name="Van Sluys M.A."/>
            <person name="Verjovski-Almeida S."/>
            <person name="Vettore A.L."/>
            <person name="Zago M.A."/>
            <person name="Zatz M."/>
            <person name="Meidanis J."/>
            <person name="Setubal J.C."/>
        </authorList>
    </citation>
    <scope>NUCLEOTIDE SEQUENCE [LARGE SCALE GENOMIC DNA]</scope>
    <source>
        <strain>9a5c</strain>
    </source>
</reference>
<accession>Q9PH03</accession>
<comment type="function">
    <text evidence="1">Catalyzes the irreversible transfer of a propylamine group from the amino donor S-adenosylmethioninamine (decarboxy-AdoMet) to putrescine (1,4-diaminobutane) to yield spermidine.</text>
</comment>
<comment type="catalytic activity">
    <reaction evidence="1">
        <text>S-adenosyl 3-(methylsulfanyl)propylamine + putrescine = S-methyl-5'-thioadenosine + spermidine + H(+)</text>
        <dbReference type="Rhea" id="RHEA:12721"/>
        <dbReference type="ChEBI" id="CHEBI:15378"/>
        <dbReference type="ChEBI" id="CHEBI:17509"/>
        <dbReference type="ChEBI" id="CHEBI:57443"/>
        <dbReference type="ChEBI" id="CHEBI:57834"/>
        <dbReference type="ChEBI" id="CHEBI:326268"/>
        <dbReference type="EC" id="2.5.1.16"/>
    </reaction>
</comment>
<comment type="pathway">
    <text evidence="1">Amine and polyamine biosynthesis; spermidine biosynthesis; spermidine from putrescine: step 1/1.</text>
</comment>
<comment type="subunit">
    <text evidence="1">Homodimer or homotetramer.</text>
</comment>
<comment type="subcellular location">
    <subcellularLocation>
        <location evidence="1">Cytoplasm</location>
    </subcellularLocation>
</comment>
<comment type="similarity">
    <text evidence="1">Belongs to the spermidine/spermine synthase family.</text>
</comment>
<protein>
    <recommendedName>
        <fullName evidence="1">Polyamine aminopropyltransferase</fullName>
    </recommendedName>
    <alternativeName>
        <fullName evidence="1">Putrescine aminopropyltransferase</fullName>
        <shortName evidence="1">PAPT</shortName>
    </alternativeName>
    <alternativeName>
        <fullName evidence="1">Spermidine synthase</fullName>
        <shortName evidence="1">SPDS</shortName>
        <shortName evidence="1">SPDSY</shortName>
        <ecNumber evidence="1">2.5.1.16</ecNumber>
    </alternativeName>
</protein>
<evidence type="ECO:0000255" key="1">
    <source>
        <dbReference type="HAMAP-Rule" id="MF_00198"/>
    </source>
</evidence>
<keyword id="KW-0963">Cytoplasm</keyword>
<keyword id="KW-0620">Polyamine biosynthesis</keyword>
<keyword id="KW-0745">Spermidine biosynthesis</keyword>
<keyword id="KW-0808">Transferase</keyword>
<proteinExistence type="inferred from homology"/>
<name>SPEE_XYLFA</name>
<gene>
    <name evidence="1" type="primary">speE</name>
    <name type="ordered locus">XF_0143</name>
</gene>
<feature type="chain" id="PRO_0000156521" description="Polyamine aminopropyltransferase">
    <location>
        <begin position="1"/>
        <end position="285"/>
    </location>
</feature>
<feature type="domain" description="PABS" evidence="1">
    <location>
        <begin position="5"/>
        <end position="241"/>
    </location>
</feature>
<feature type="active site" description="Proton acceptor" evidence="1">
    <location>
        <position position="160"/>
    </location>
</feature>
<feature type="binding site" evidence="1">
    <location>
        <position position="35"/>
    </location>
    <ligand>
        <name>S-methyl-5'-thioadenosine</name>
        <dbReference type="ChEBI" id="CHEBI:17509"/>
    </ligand>
</feature>
<feature type="binding site" evidence="1">
    <location>
        <position position="66"/>
    </location>
    <ligand>
        <name>spermidine</name>
        <dbReference type="ChEBI" id="CHEBI:57834"/>
    </ligand>
</feature>
<feature type="binding site" evidence="1">
    <location>
        <position position="90"/>
    </location>
    <ligand>
        <name>spermidine</name>
        <dbReference type="ChEBI" id="CHEBI:57834"/>
    </ligand>
</feature>
<feature type="binding site" evidence="1">
    <location>
        <position position="110"/>
    </location>
    <ligand>
        <name>S-methyl-5'-thioadenosine</name>
        <dbReference type="ChEBI" id="CHEBI:17509"/>
    </ligand>
</feature>
<feature type="binding site" evidence="1">
    <location>
        <begin position="141"/>
        <end position="142"/>
    </location>
    <ligand>
        <name>S-methyl-5'-thioadenosine</name>
        <dbReference type="ChEBI" id="CHEBI:17509"/>
    </ligand>
</feature>
<feature type="binding site" evidence="1">
    <location>
        <begin position="160"/>
        <end position="163"/>
    </location>
    <ligand>
        <name>spermidine</name>
        <dbReference type="ChEBI" id="CHEBI:57834"/>
    </ligand>
</feature>
<feature type="binding site" evidence="1">
    <location>
        <position position="167"/>
    </location>
    <ligand>
        <name>S-methyl-5'-thioadenosine</name>
        <dbReference type="ChEBI" id="CHEBI:17509"/>
    </ligand>
</feature>